<keyword id="KW-0997">Cell inner membrane</keyword>
<keyword id="KW-1003">Cell membrane</keyword>
<keyword id="KW-0342">GTP-binding</keyword>
<keyword id="KW-0378">Hydrolase</keyword>
<keyword id="KW-0472">Membrane</keyword>
<keyword id="KW-0547">Nucleotide-binding</keyword>
<keyword id="KW-0648">Protein biosynthesis</keyword>
<keyword id="KW-1185">Reference proteome</keyword>
<reference key="1">
    <citation type="journal article" date="2003" name="Proc. Natl. Acad. Sci. U.S.A.">
        <title>The complete genome sequence of Chromobacterium violaceum reveals remarkable and exploitable bacterial adaptability.</title>
        <authorList>
            <person name="Vasconcelos A.T.R."/>
            <person name="de Almeida D.F."/>
            <person name="Hungria M."/>
            <person name="Guimaraes C.T."/>
            <person name="Antonio R.V."/>
            <person name="Almeida F.C."/>
            <person name="de Almeida L.G.P."/>
            <person name="de Almeida R."/>
            <person name="Alves-Gomes J.A."/>
            <person name="Andrade E.M."/>
            <person name="Araripe J."/>
            <person name="de Araujo M.F.F."/>
            <person name="Astolfi-Filho S."/>
            <person name="Azevedo V."/>
            <person name="Baptista A.J."/>
            <person name="Bataus L.A.M."/>
            <person name="Batista J.S."/>
            <person name="Belo A."/>
            <person name="van den Berg C."/>
            <person name="Bogo M."/>
            <person name="Bonatto S."/>
            <person name="Bordignon J."/>
            <person name="Brigido M.M."/>
            <person name="Brito C.A."/>
            <person name="Brocchi M."/>
            <person name="Burity H.A."/>
            <person name="Camargo A.A."/>
            <person name="Cardoso D.D.P."/>
            <person name="Carneiro N.P."/>
            <person name="Carraro D.M."/>
            <person name="Carvalho C.M.B."/>
            <person name="Cascardo J.C.M."/>
            <person name="Cavada B.S."/>
            <person name="Chueire L.M.O."/>
            <person name="Creczynski-Pasa T.B."/>
            <person name="Cunha-Junior N.C."/>
            <person name="Fagundes N."/>
            <person name="Falcao C.L."/>
            <person name="Fantinatti F."/>
            <person name="Farias I.P."/>
            <person name="Felipe M.S.S."/>
            <person name="Ferrari L.P."/>
            <person name="Ferro J.A."/>
            <person name="Ferro M.I.T."/>
            <person name="Franco G.R."/>
            <person name="Freitas N.S.A."/>
            <person name="Furlan L.R."/>
            <person name="Gazzinelli R.T."/>
            <person name="Gomes E.A."/>
            <person name="Goncalves P.R."/>
            <person name="Grangeiro T.B."/>
            <person name="Grattapaglia D."/>
            <person name="Grisard E.C."/>
            <person name="Hanna E.S."/>
            <person name="Jardim S.N."/>
            <person name="Laurino J."/>
            <person name="Leoi L.C.T."/>
            <person name="Lima L.F.A."/>
            <person name="Loureiro M.F."/>
            <person name="Lyra M.C.C.P."/>
            <person name="Madeira H.M.F."/>
            <person name="Manfio G.P."/>
            <person name="Maranhao A.Q."/>
            <person name="Martins W.S."/>
            <person name="di Mauro S.M.Z."/>
            <person name="de Medeiros S.R.B."/>
            <person name="Meissner R.V."/>
            <person name="Moreira M.A.M."/>
            <person name="Nascimento F.F."/>
            <person name="Nicolas M.F."/>
            <person name="Oliveira J.G."/>
            <person name="Oliveira S.C."/>
            <person name="Paixao R.F.C."/>
            <person name="Parente J.A."/>
            <person name="Pedrosa F.O."/>
            <person name="Pena S.D.J."/>
            <person name="Pereira J.O."/>
            <person name="Pereira M."/>
            <person name="Pinto L.S.R.C."/>
            <person name="Pinto L.S."/>
            <person name="Porto J.I.R."/>
            <person name="Potrich D.P."/>
            <person name="Ramalho-Neto C.E."/>
            <person name="Reis A.M.M."/>
            <person name="Rigo L.U."/>
            <person name="Rondinelli E."/>
            <person name="Santos E.B.P."/>
            <person name="Santos F.R."/>
            <person name="Schneider M.P.C."/>
            <person name="Seuanez H.N."/>
            <person name="Silva A.M.R."/>
            <person name="da Silva A.L.C."/>
            <person name="Silva D.W."/>
            <person name="Silva R."/>
            <person name="Simoes I.C."/>
            <person name="Simon D."/>
            <person name="Soares C.M.A."/>
            <person name="Soares R.B.A."/>
            <person name="Souza E.M."/>
            <person name="Souza K.R.L."/>
            <person name="Souza R.C."/>
            <person name="Steffens M.B.R."/>
            <person name="Steindel M."/>
            <person name="Teixeira S.R."/>
            <person name="Urmenyi T."/>
            <person name="Vettore A."/>
            <person name="Wassem R."/>
            <person name="Zaha A."/>
            <person name="Simpson A.J.G."/>
        </authorList>
    </citation>
    <scope>NUCLEOTIDE SEQUENCE [LARGE SCALE GENOMIC DNA]</scope>
    <source>
        <strain>ATCC 12472 / DSM 30191 / JCM 1249 / CCUG 213 / NBRC 12614 / NCIMB 9131 / NCTC 9757 / MK</strain>
    </source>
</reference>
<organism>
    <name type="scientific">Chromobacterium violaceum (strain ATCC 12472 / DSM 30191 / JCM 1249 / CCUG 213 / NBRC 12614 / NCIMB 9131 / NCTC 9757 / MK)</name>
    <dbReference type="NCBI Taxonomy" id="243365"/>
    <lineage>
        <taxon>Bacteria</taxon>
        <taxon>Pseudomonadati</taxon>
        <taxon>Pseudomonadota</taxon>
        <taxon>Betaproteobacteria</taxon>
        <taxon>Neisseriales</taxon>
        <taxon>Chromobacteriaceae</taxon>
        <taxon>Chromobacterium</taxon>
    </lineage>
</organism>
<evidence type="ECO:0000255" key="1">
    <source>
        <dbReference type="HAMAP-Rule" id="MF_00071"/>
    </source>
</evidence>
<protein>
    <recommendedName>
        <fullName evidence="1">Elongation factor 4</fullName>
        <shortName evidence="1">EF-4</shortName>
        <ecNumber evidence="1">3.6.5.n1</ecNumber>
    </recommendedName>
    <alternativeName>
        <fullName evidence="1">Ribosomal back-translocase LepA</fullName>
    </alternativeName>
</protein>
<comment type="function">
    <text evidence="1">Required for accurate and efficient protein synthesis under certain stress conditions. May act as a fidelity factor of the translation reaction, by catalyzing a one-codon backward translocation of tRNAs on improperly translocated ribosomes. Back-translocation proceeds from a post-translocation (POST) complex to a pre-translocation (PRE) complex, thus giving elongation factor G a second chance to translocate the tRNAs correctly. Binds to ribosomes in a GTP-dependent manner.</text>
</comment>
<comment type="catalytic activity">
    <reaction evidence="1">
        <text>GTP + H2O = GDP + phosphate + H(+)</text>
        <dbReference type="Rhea" id="RHEA:19669"/>
        <dbReference type="ChEBI" id="CHEBI:15377"/>
        <dbReference type="ChEBI" id="CHEBI:15378"/>
        <dbReference type="ChEBI" id="CHEBI:37565"/>
        <dbReference type="ChEBI" id="CHEBI:43474"/>
        <dbReference type="ChEBI" id="CHEBI:58189"/>
        <dbReference type="EC" id="3.6.5.n1"/>
    </reaction>
</comment>
<comment type="subcellular location">
    <subcellularLocation>
        <location evidence="1">Cell inner membrane</location>
        <topology evidence="1">Peripheral membrane protein</topology>
        <orientation evidence="1">Cytoplasmic side</orientation>
    </subcellularLocation>
</comment>
<comment type="similarity">
    <text evidence="1">Belongs to the TRAFAC class translation factor GTPase superfamily. Classic translation factor GTPase family. LepA subfamily.</text>
</comment>
<sequence>MKNIRNFSIIAHIDHGKSTLADRFIQFCGGLELREMSAQVLDSMDIEKERGITIKAQTAALQYKARDGQVYNLNLIDTPGHVDFSYEVSRSLSACEGALLVVDASQGVEAQTVANCYTAIDLGVEVVPVLNKIDLPAADPERISQEIEDIIGIEAVEAVRASAKSGIGIEDILEEVVNKIPPPKGDPDGPLKALIVDSWFDNYVGVVMLVRVIDGSLKPKDKIKFMATGAEHLCEQVGVFTPKSVQRPSLNAGEVGFVIAGIKELKSAKVGDTITLVSKPATEALPGFKDVQSQVFAGLYPVESHDYEALRDALEKLQLNDASLKYEPEVSQALGFGFRCGFLGLLHLEIVQERLEREFDMDLITTAPTVNYEVVMKDGTVEVVSNPSRMPEAGKYDELREPIITSTILVPQDYVGSVMTLCNQKRGVQRNMQYMGRQVMLTYDLPMNEVVMDFFDKLKSTSRGYASLDYEFKEFQSADLVKLDVLVNGEKVDALSLIVHRASSVYRGRELVAKMRELIPRQMFDIAVQAAIGGHIIARETVKALRKNVLAKCYGGDITRKKKLLEKQKAGKKRMKQVGNVEIPQEAFLAILQVGDK</sequence>
<name>LEPA_CHRVO</name>
<feature type="chain" id="PRO_0000176260" description="Elongation factor 4">
    <location>
        <begin position="1"/>
        <end position="597"/>
    </location>
</feature>
<feature type="domain" description="tr-type G">
    <location>
        <begin position="2"/>
        <end position="184"/>
    </location>
</feature>
<feature type="binding site" evidence="1">
    <location>
        <begin position="14"/>
        <end position="19"/>
    </location>
    <ligand>
        <name>GTP</name>
        <dbReference type="ChEBI" id="CHEBI:37565"/>
    </ligand>
</feature>
<feature type="binding site" evidence="1">
    <location>
        <begin position="131"/>
        <end position="134"/>
    </location>
    <ligand>
        <name>GTP</name>
        <dbReference type="ChEBI" id="CHEBI:37565"/>
    </ligand>
</feature>
<gene>
    <name evidence="1" type="primary">lepA</name>
    <name type="ordered locus">CV_2063</name>
</gene>
<accession>Q7NWC7</accession>
<proteinExistence type="inferred from homology"/>
<dbReference type="EC" id="3.6.5.n1" evidence="1"/>
<dbReference type="EMBL" id="AE016825">
    <property type="protein sequence ID" value="AAQ59735.1"/>
    <property type="molecule type" value="Genomic_DNA"/>
</dbReference>
<dbReference type="RefSeq" id="WP_011135611.1">
    <property type="nucleotide sequence ID" value="NC_005085.1"/>
</dbReference>
<dbReference type="SMR" id="Q7NWC7"/>
<dbReference type="STRING" id="243365.CV_2063"/>
<dbReference type="GeneID" id="66367727"/>
<dbReference type="KEGG" id="cvi:CV_2063"/>
<dbReference type="eggNOG" id="COG0481">
    <property type="taxonomic scope" value="Bacteria"/>
</dbReference>
<dbReference type="HOGENOM" id="CLU_009995_3_3_4"/>
<dbReference type="OrthoDB" id="9801472at2"/>
<dbReference type="Proteomes" id="UP000001424">
    <property type="component" value="Chromosome"/>
</dbReference>
<dbReference type="GO" id="GO:0005886">
    <property type="term" value="C:plasma membrane"/>
    <property type="evidence" value="ECO:0007669"/>
    <property type="project" value="UniProtKB-SubCell"/>
</dbReference>
<dbReference type="GO" id="GO:0005525">
    <property type="term" value="F:GTP binding"/>
    <property type="evidence" value="ECO:0007669"/>
    <property type="project" value="UniProtKB-UniRule"/>
</dbReference>
<dbReference type="GO" id="GO:0003924">
    <property type="term" value="F:GTPase activity"/>
    <property type="evidence" value="ECO:0007669"/>
    <property type="project" value="UniProtKB-UniRule"/>
</dbReference>
<dbReference type="GO" id="GO:0097216">
    <property type="term" value="F:guanosine tetraphosphate binding"/>
    <property type="evidence" value="ECO:0007669"/>
    <property type="project" value="UniProtKB-ARBA"/>
</dbReference>
<dbReference type="GO" id="GO:0043022">
    <property type="term" value="F:ribosome binding"/>
    <property type="evidence" value="ECO:0007669"/>
    <property type="project" value="UniProtKB-UniRule"/>
</dbReference>
<dbReference type="GO" id="GO:0003746">
    <property type="term" value="F:translation elongation factor activity"/>
    <property type="evidence" value="ECO:0007669"/>
    <property type="project" value="UniProtKB-UniRule"/>
</dbReference>
<dbReference type="GO" id="GO:0045727">
    <property type="term" value="P:positive regulation of translation"/>
    <property type="evidence" value="ECO:0007669"/>
    <property type="project" value="UniProtKB-UniRule"/>
</dbReference>
<dbReference type="CDD" id="cd03699">
    <property type="entry name" value="EF4_II"/>
    <property type="match status" value="1"/>
</dbReference>
<dbReference type="CDD" id="cd16260">
    <property type="entry name" value="EF4_III"/>
    <property type="match status" value="1"/>
</dbReference>
<dbReference type="CDD" id="cd01890">
    <property type="entry name" value="LepA"/>
    <property type="match status" value="1"/>
</dbReference>
<dbReference type="CDD" id="cd03709">
    <property type="entry name" value="lepA_C"/>
    <property type="match status" value="1"/>
</dbReference>
<dbReference type="FunFam" id="3.40.50.300:FF:000078">
    <property type="entry name" value="Elongation factor 4"/>
    <property type="match status" value="1"/>
</dbReference>
<dbReference type="FunFam" id="2.40.30.10:FF:000015">
    <property type="entry name" value="Translation factor GUF1, mitochondrial"/>
    <property type="match status" value="1"/>
</dbReference>
<dbReference type="FunFam" id="3.30.70.240:FF:000007">
    <property type="entry name" value="Translation factor GUF1, mitochondrial"/>
    <property type="match status" value="1"/>
</dbReference>
<dbReference type="FunFam" id="3.30.70.2570:FF:000001">
    <property type="entry name" value="Translation factor GUF1, mitochondrial"/>
    <property type="match status" value="1"/>
</dbReference>
<dbReference type="FunFam" id="3.30.70.870:FF:000004">
    <property type="entry name" value="Translation factor GUF1, mitochondrial"/>
    <property type="match status" value="1"/>
</dbReference>
<dbReference type="Gene3D" id="3.30.70.240">
    <property type="match status" value="1"/>
</dbReference>
<dbReference type="Gene3D" id="3.30.70.2570">
    <property type="entry name" value="Elongation factor 4, C-terminal domain"/>
    <property type="match status" value="1"/>
</dbReference>
<dbReference type="Gene3D" id="3.30.70.870">
    <property type="entry name" value="Elongation Factor G (Translational Gtpase), domain 3"/>
    <property type="match status" value="1"/>
</dbReference>
<dbReference type="Gene3D" id="3.40.50.300">
    <property type="entry name" value="P-loop containing nucleotide triphosphate hydrolases"/>
    <property type="match status" value="1"/>
</dbReference>
<dbReference type="Gene3D" id="2.40.30.10">
    <property type="entry name" value="Translation factors"/>
    <property type="match status" value="1"/>
</dbReference>
<dbReference type="HAMAP" id="MF_00071">
    <property type="entry name" value="LepA"/>
    <property type="match status" value="1"/>
</dbReference>
<dbReference type="InterPro" id="IPR006297">
    <property type="entry name" value="EF-4"/>
</dbReference>
<dbReference type="InterPro" id="IPR035647">
    <property type="entry name" value="EFG_III/V"/>
</dbReference>
<dbReference type="InterPro" id="IPR000640">
    <property type="entry name" value="EFG_V-like"/>
</dbReference>
<dbReference type="InterPro" id="IPR004161">
    <property type="entry name" value="EFTu-like_2"/>
</dbReference>
<dbReference type="InterPro" id="IPR031157">
    <property type="entry name" value="G_TR_CS"/>
</dbReference>
<dbReference type="InterPro" id="IPR038363">
    <property type="entry name" value="LepA_C_sf"/>
</dbReference>
<dbReference type="InterPro" id="IPR013842">
    <property type="entry name" value="LepA_CTD"/>
</dbReference>
<dbReference type="InterPro" id="IPR035654">
    <property type="entry name" value="LepA_IV"/>
</dbReference>
<dbReference type="InterPro" id="IPR027417">
    <property type="entry name" value="P-loop_NTPase"/>
</dbReference>
<dbReference type="InterPro" id="IPR005225">
    <property type="entry name" value="Small_GTP-bd"/>
</dbReference>
<dbReference type="InterPro" id="IPR000795">
    <property type="entry name" value="T_Tr_GTP-bd_dom"/>
</dbReference>
<dbReference type="InterPro" id="IPR009000">
    <property type="entry name" value="Transl_B-barrel_sf"/>
</dbReference>
<dbReference type="NCBIfam" id="TIGR01393">
    <property type="entry name" value="lepA"/>
    <property type="match status" value="1"/>
</dbReference>
<dbReference type="NCBIfam" id="TIGR00231">
    <property type="entry name" value="small_GTP"/>
    <property type="match status" value="1"/>
</dbReference>
<dbReference type="PANTHER" id="PTHR43512:SF4">
    <property type="entry name" value="TRANSLATION FACTOR GUF1 HOMOLOG, CHLOROPLASTIC"/>
    <property type="match status" value="1"/>
</dbReference>
<dbReference type="PANTHER" id="PTHR43512">
    <property type="entry name" value="TRANSLATION FACTOR GUF1-RELATED"/>
    <property type="match status" value="1"/>
</dbReference>
<dbReference type="Pfam" id="PF00679">
    <property type="entry name" value="EFG_C"/>
    <property type="match status" value="1"/>
</dbReference>
<dbReference type="Pfam" id="PF00009">
    <property type="entry name" value="GTP_EFTU"/>
    <property type="match status" value="1"/>
</dbReference>
<dbReference type="Pfam" id="PF03144">
    <property type="entry name" value="GTP_EFTU_D2"/>
    <property type="match status" value="1"/>
</dbReference>
<dbReference type="Pfam" id="PF06421">
    <property type="entry name" value="LepA_C"/>
    <property type="match status" value="1"/>
</dbReference>
<dbReference type="PRINTS" id="PR00315">
    <property type="entry name" value="ELONGATNFCT"/>
</dbReference>
<dbReference type="SMART" id="SM00838">
    <property type="entry name" value="EFG_C"/>
    <property type="match status" value="1"/>
</dbReference>
<dbReference type="SUPFAM" id="SSF54980">
    <property type="entry name" value="EF-G C-terminal domain-like"/>
    <property type="match status" value="2"/>
</dbReference>
<dbReference type="SUPFAM" id="SSF52540">
    <property type="entry name" value="P-loop containing nucleoside triphosphate hydrolases"/>
    <property type="match status" value="1"/>
</dbReference>
<dbReference type="SUPFAM" id="SSF50447">
    <property type="entry name" value="Translation proteins"/>
    <property type="match status" value="1"/>
</dbReference>
<dbReference type="PROSITE" id="PS00301">
    <property type="entry name" value="G_TR_1"/>
    <property type="match status" value="1"/>
</dbReference>
<dbReference type="PROSITE" id="PS51722">
    <property type="entry name" value="G_TR_2"/>
    <property type="match status" value="1"/>
</dbReference>